<name>CG057_BOVIN</name>
<proteinExistence type="evidence at transcript level"/>
<accession>A0JNL1</accession>
<sequence length="288" mass="31729">MRNTSKELHGAASRYAPCDWYYHLPVKQSEKAVDAPPASQIPGLSDPREAPSGHTLGLRRYWVKETDSEYVKLAKQGGRPDLLKHFAPGTTKGSPVAYSLPDWYIHHSKPPTADQRQVPAVSIPDYMVYEEFNPDQATGNFESRMGPFDFDMKTIWQREAEELEKEKKKVRLPAIKSKYPSKVGTPLGHREPAGSKLSFPPIPGQRPSSPTNFSKLISNGYKDEWLQQQADSDKRAPQTPQSSVSSPSPLDAELPADPEAPGDTTEAAESSPLSSAAPPPDSTPVELK</sequence>
<organism>
    <name type="scientific">Bos taurus</name>
    <name type="common">Bovine</name>
    <dbReference type="NCBI Taxonomy" id="9913"/>
    <lineage>
        <taxon>Eukaryota</taxon>
        <taxon>Metazoa</taxon>
        <taxon>Chordata</taxon>
        <taxon>Craniata</taxon>
        <taxon>Vertebrata</taxon>
        <taxon>Euteleostomi</taxon>
        <taxon>Mammalia</taxon>
        <taxon>Eutheria</taxon>
        <taxon>Laurasiatheria</taxon>
        <taxon>Artiodactyla</taxon>
        <taxon>Ruminantia</taxon>
        <taxon>Pecora</taxon>
        <taxon>Bovidae</taxon>
        <taxon>Bovinae</taxon>
        <taxon>Bos</taxon>
    </lineage>
</organism>
<dbReference type="EMBL" id="BC126755">
    <property type="protein sequence ID" value="AAI26756.1"/>
    <property type="molecule type" value="mRNA"/>
</dbReference>
<dbReference type="RefSeq" id="NP_001073253.1">
    <property type="nucleotide sequence ID" value="NM_001079785.1"/>
</dbReference>
<dbReference type="FunCoup" id="A0JNL1">
    <property type="interactions" value="83"/>
</dbReference>
<dbReference type="STRING" id="9913.ENSBTAP00000046417"/>
<dbReference type="PaxDb" id="9913-ENSBTAP00000046417"/>
<dbReference type="GeneID" id="614195"/>
<dbReference type="KEGG" id="bta:614195"/>
<dbReference type="CTD" id="614195"/>
<dbReference type="VEuPathDB" id="HostDB:ENSBTAG00000035064"/>
<dbReference type="eggNOG" id="ENOG502S6DP">
    <property type="taxonomic scope" value="Eukaryota"/>
</dbReference>
<dbReference type="InParanoid" id="A0JNL1"/>
<dbReference type="OMA" id="MVYEEFH"/>
<dbReference type="OrthoDB" id="10012494at2759"/>
<dbReference type="Proteomes" id="UP000009136">
    <property type="component" value="Chromosome 4"/>
</dbReference>
<dbReference type="Bgee" id="ENSBTAG00000035064">
    <property type="expression patterns" value="Expressed in surface of tongue and 70 other cell types or tissues"/>
</dbReference>
<dbReference type="InterPro" id="IPR040247">
    <property type="entry name" value="DUF5524"/>
</dbReference>
<dbReference type="PANTHER" id="PTHR31097:SF2">
    <property type="entry name" value="CHROMOSOME 7 OPEN READING FRAME 57"/>
    <property type="match status" value="1"/>
</dbReference>
<dbReference type="PANTHER" id="PTHR31097">
    <property type="entry name" value="SI:DKEY-276J7.1"/>
    <property type="match status" value="1"/>
</dbReference>
<dbReference type="Pfam" id="PF17662">
    <property type="entry name" value="DUF5524"/>
    <property type="match status" value="1"/>
</dbReference>
<reference key="1">
    <citation type="submission" date="2006-10" db="EMBL/GenBank/DDBJ databases">
        <authorList>
            <consortium name="NIH - Mammalian Gene Collection (MGC) project"/>
        </authorList>
    </citation>
    <scope>NUCLEOTIDE SEQUENCE [LARGE SCALE MRNA]</scope>
    <source>
        <strain>Hereford</strain>
        <tissue>Fetal muscle</tissue>
    </source>
</reference>
<protein>
    <recommendedName>
        <fullName>Uncharacterized protein C7orf57 homolog</fullName>
    </recommendedName>
</protein>
<evidence type="ECO:0000256" key="1">
    <source>
        <dbReference type="SAM" id="MobiDB-lite"/>
    </source>
</evidence>
<feature type="chain" id="PRO_0000310990" description="Uncharacterized protein C7orf57 homolog">
    <location>
        <begin position="1"/>
        <end position="288"/>
    </location>
</feature>
<feature type="region of interest" description="Disordered" evidence="1">
    <location>
        <begin position="31"/>
        <end position="52"/>
    </location>
</feature>
<feature type="region of interest" description="Disordered" evidence="1">
    <location>
        <begin position="179"/>
        <end position="288"/>
    </location>
</feature>
<feature type="compositionally biased region" description="Polar residues" evidence="1">
    <location>
        <begin position="206"/>
        <end position="217"/>
    </location>
</feature>
<feature type="compositionally biased region" description="Basic and acidic residues" evidence="1">
    <location>
        <begin position="221"/>
        <end position="236"/>
    </location>
</feature>
<feature type="compositionally biased region" description="Low complexity" evidence="1">
    <location>
        <begin position="237"/>
        <end position="249"/>
    </location>
</feature>
<feature type="compositionally biased region" description="Low complexity" evidence="1">
    <location>
        <begin position="267"/>
        <end position="276"/>
    </location>
</feature>
<keyword id="KW-1185">Reference proteome</keyword>